<accession>G4MSY9</accession>
<reference key="1">
    <citation type="journal article" date="2005" name="Nature">
        <title>The genome sequence of the rice blast fungus Magnaporthe grisea.</title>
        <authorList>
            <person name="Dean R.A."/>
            <person name="Talbot N.J."/>
            <person name="Ebbole D.J."/>
            <person name="Farman M.L."/>
            <person name="Mitchell T.K."/>
            <person name="Orbach M.J."/>
            <person name="Thon M.R."/>
            <person name="Kulkarni R."/>
            <person name="Xu J.-R."/>
            <person name="Pan H."/>
            <person name="Read N.D."/>
            <person name="Lee Y.-H."/>
            <person name="Carbone I."/>
            <person name="Brown D."/>
            <person name="Oh Y.Y."/>
            <person name="Donofrio N."/>
            <person name="Jeong J.S."/>
            <person name="Soanes D.M."/>
            <person name="Djonovic S."/>
            <person name="Kolomiets E."/>
            <person name="Rehmeyer C."/>
            <person name="Li W."/>
            <person name="Harding M."/>
            <person name="Kim S."/>
            <person name="Lebrun M.-H."/>
            <person name="Bohnert H."/>
            <person name="Coughlan S."/>
            <person name="Butler J."/>
            <person name="Calvo S.E."/>
            <person name="Ma L.-J."/>
            <person name="Nicol R."/>
            <person name="Purcell S."/>
            <person name="Nusbaum C."/>
            <person name="Galagan J.E."/>
            <person name="Birren B.W."/>
        </authorList>
    </citation>
    <scope>NUCLEOTIDE SEQUENCE [LARGE SCALE GENOMIC DNA]</scope>
    <source>
        <strain>70-15 / ATCC MYA-4617 / FGSC 8958</strain>
    </source>
</reference>
<reference key="2">
    <citation type="journal article" date="2019" name="FEMS Microbiol. Lett.">
        <title>N6-methyladenosine RNA methylation is involved in virulence of the rice blast fungus Pyricularia oryzae (syn. Magnaporthe oryzae).</title>
        <authorList>
            <person name="Shi Y."/>
            <person name="Wang H."/>
            <person name="Wang J."/>
            <person name="Liu X."/>
            <person name="Lin F."/>
            <person name="Lu J."/>
        </authorList>
    </citation>
    <scope>FUNCTION</scope>
    <scope>CATALYTIC ACTIVITY</scope>
    <scope>DISRUPTION PHENOTYPE</scope>
</reference>
<reference key="3">
    <citation type="journal article" date="2022" name="New Phytol.">
        <title>MTA1-mediated RNA m6 A modification regulates autophagy and is required for infection of the rice blast fungus.</title>
        <authorList>
            <person name="Ren Z."/>
            <person name="Tang B."/>
            <person name="Xing J."/>
            <person name="Liu C."/>
            <person name="Cai X."/>
            <person name="Hendy A."/>
            <person name="Kamran M."/>
            <person name="Liu H."/>
            <person name="Zheng L."/>
            <person name="Huang J."/>
            <person name="Chen X.L."/>
        </authorList>
    </citation>
    <scope>FUNCTION</scope>
    <scope>CATALYTIC ACTIVITY</scope>
    <scope>DISRUPTION PHENOTYPE</scope>
</reference>
<comment type="function">
    <text evidence="2 3">N6-methyladenosine RNA methyltransferase that plays a crucial role in fungal phenotypic traits, virulence, and stress tolerance (PubMed:35338654). Mediates the methylation of mRNAs to produce N6-methyladenosine (m6A)-containing mRNAs (PubMed:30535195, PubMed:35338654). M6A is a modification present at internal sites of mRNAs and some non-coding RNAs and plays a role in mRNA stability and processing (PubMed:35338654). Required for appressorium turgor pressure and regulates autophagosome formation during appressorium formation stage (PubMed:35338654). Specifically, mediates the stability of ATG8 mRNA in a m6A-dependent manner via modification of the m6A site A982 located in 3'UTR region (PubMed:35338654).</text>
</comment>
<comment type="catalytic activity">
    <reaction evidence="2 3">
        <text>an adenosine in mRNA + S-adenosyl-L-methionine = an N(6)-methyladenosine in mRNA + S-adenosyl-L-homocysteine + H(+)</text>
        <dbReference type="Rhea" id="RHEA:55584"/>
        <dbReference type="Rhea" id="RHEA-COMP:12414"/>
        <dbReference type="Rhea" id="RHEA-COMP:12417"/>
        <dbReference type="ChEBI" id="CHEBI:15378"/>
        <dbReference type="ChEBI" id="CHEBI:57856"/>
        <dbReference type="ChEBI" id="CHEBI:59789"/>
        <dbReference type="ChEBI" id="CHEBI:74411"/>
        <dbReference type="ChEBI" id="CHEBI:74449"/>
        <dbReference type="EC" id="2.1.1.348"/>
    </reaction>
    <physiologicalReaction direction="left-to-right" evidence="2 3">
        <dbReference type="Rhea" id="RHEA:55585"/>
    </physiologicalReaction>
</comment>
<comment type="disruption phenotype">
    <text evidence="2 3">Affects vegetative growth and conidial formation and results in increased sensitivity to various stresses (PubMed:35338654). Decreases pathogenicity and activates plant host immune responses (PubMed:30535195, PubMed:35338654).</text>
</comment>
<comment type="similarity">
    <text evidence="6">Belongs to the MT-A70-like family.</text>
</comment>
<protein>
    <recommendedName>
        <fullName evidence="5">N6-methyladenosine RNA methyltransferase MTA1</fullName>
        <ecNumber evidence="3">2.1.1.348</ecNumber>
    </recommendedName>
    <alternativeName>
        <fullName evidence="6">M6A writer MTA1</fullName>
    </alternativeName>
</protein>
<evidence type="ECO:0000256" key="1">
    <source>
        <dbReference type="SAM" id="MobiDB-lite"/>
    </source>
</evidence>
<evidence type="ECO:0000269" key="2">
    <source>
    </source>
</evidence>
<evidence type="ECO:0000269" key="3">
    <source>
    </source>
</evidence>
<evidence type="ECO:0000303" key="4">
    <source>
    </source>
</evidence>
<evidence type="ECO:0000303" key="5">
    <source>
    </source>
</evidence>
<evidence type="ECO:0000305" key="6"/>
<keyword id="KW-0072">Autophagy</keyword>
<keyword id="KW-0489">Methyltransferase</keyword>
<keyword id="KW-1185">Reference proteome</keyword>
<keyword id="KW-0694">RNA-binding</keyword>
<keyword id="KW-0949">S-adenosyl-L-methionine</keyword>
<keyword id="KW-0749">Sporulation</keyword>
<keyword id="KW-0808">Transferase</keyword>
<keyword id="KW-0843">Virulence</keyword>
<proteinExistence type="evidence at protein level"/>
<organism>
    <name type="scientific">Pyricularia oryzae (strain 70-15 / ATCC MYA-4617 / FGSC 8958)</name>
    <name type="common">Rice blast fungus</name>
    <name type="synonym">Magnaporthe oryzae</name>
    <dbReference type="NCBI Taxonomy" id="242507"/>
    <lineage>
        <taxon>Eukaryota</taxon>
        <taxon>Fungi</taxon>
        <taxon>Dikarya</taxon>
        <taxon>Ascomycota</taxon>
        <taxon>Pezizomycotina</taxon>
        <taxon>Sordariomycetes</taxon>
        <taxon>Sordariomycetidae</taxon>
        <taxon>Magnaporthales</taxon>
        <taxon>Pyriculariaceae</taxon>
        <taxon>Pyricularia</taxon>
    </lineage>
</organism>
<feature type="chain" id="PRO_0000462149" description="N6-methyladenosine RNA methyltransferase MTA1">
    <location>
        <begin position="1"/>
        <end position="376"/>
    </location>
</feature>
<feature type="region of interest" description="Disordered" evidence="1">
    <location>
        <begin position="53"/>
        <end position="78"/>
    </location>
</feature>
<name>MTA1_PYRO7</name>
<sequence length="376" mass="41556">MTAATLFESTDGTVVLLDLPRSIEDAQQHPAAVTLPEAPSLVTNSCRDGTSWTRRLISSPPPETPFVTPEPKNGPSPLPAAAQVAQLMIQASVTGALEELRTNYSGPYLLPRQLSPQRMIADGGKAVDDYKSPHACDLESCSTTAEDATKGRYYFPPESHHVLGTIQETKTLLLQSAPNFNVIVLDPPWPNRSAKRKKGGYKVATTTDDIRALLSDVPIPSLLARDGLVAIWVTNKPAFLDMLTSPRDGILSEWGLELVGEWSWLKITTSAEPILPIDSAHRKPWEPLLIAQRKGSKRVFPPFWRRRVIVSVPDTHSRKPNIRDLVNPMLPPRSRGLEIFARNLTAGWWAWGDDVLHFQERSNWVMAESKSPATGC</sequence>
<dbReference type="EC" id="2.1.1.348" evidence="3"/>
<dbReference type="EMBL" id="CM001232">
    <property type="protein sequence ID" value="EHA54648.1"/>
    <property type="molecule type" value="Genomic_DNA"/>
</dbReference>
<dbReference type="RefSeq" id="XP_003714455.1">
    <property type="nucleotide sequence ID" value="XM_003714407.1"/>
</dbReference>
<dbReference type="SMR" id="G4MSY9"/>
<dbReference type="STRING" id="242507.G4MSY9"/>
<dbReference type="EnsemblFungi" id="MGG_01492T0">
    <property type="protein sequence ID" value="MGG_01492T0"/>
    <property type="gene ID" value="MGG_01492"/>
</dbReference>
<dbReference type="GeneID" id="2679801"/>
<dbReference type="KEGG" id="mgr:MGG_01492"/>
<dbReference type="VEuPathDB" id="FungiDB:MGG_01492"/>
<dbReference type="eggNOG" id="KOG2356">
    <property type="taxonomic scope" value="Eukaryota"/>
</dbReference>
<dbReference type="HOGENOM" id="CLU_027091_4_0_1"/>
<dbReference type="InParanoid" id="G4MSY9"/>
<dbReference type="OMA" id="WWSWGDQ"/>
<dbReference type="PHI-base" id="PHI:8648"/>
<dbReference type="Proteomes" id="UP000009058">
    <property type="component" value="Chromosome 2"/>
</dbReference>
<dbReference type="GO" id="GO:0005634">
    <property type="term" value="C:nucleus"/>
    <property type="evidence" value="ECO:0007669"/>
    <property type="project" value="TreeGrafter"/>
</dbReference>
<dbReference type="GO" id="GO:0008168">
    <property type="term" value="F:methyltransferase activity"/>
    <property type="evidence" value="ECO:0007669"/>
    <property type="project" value="InterPro"/>
</dbReference>
<dbReference type="GO" id="GO:0003676">
    <property type="term" value="F:nucleic acid binding"/>
    <property type="evidence" value="ECO:0007669"/>
    <property type="project" value="InterPro"/>
</dbReference>
<dbReference type="GO" id="GO:0032259">
    <property type="term" value="P:methylation"/>
    <property type="evidence" value="ECO:0007669"/>
    <property type="project" value="InterPro"/>
</dbReference>
<dbReference type="InterPro" id="IPR002052">
    <property type="entry name" value="DNA_methylase_N6_adenine_CS"/>
</dbReference>
<dbReference type="InterPro" id="IPR007757">
    <property type="entry name" value="MT-A70-like"/>
</dbReference>
<dbReference type="InterPro" id="IPR029063">
    <property type="entry name" value="SAM-dependent_MTases_sf"/>
</dbReference>
<dbReference type="PANTHER" id="PTHR12829:SF4">
    <property type="entry name" value="N(6)-ADENINE-SPECIFIC METHYLTRANSFERASE METTL4"/>
    <property type="match status" value="1"/>
</dbReference>
<dbReference type="PANTHER" id="PTHR12829">
    <property type="entry name" value="N6-ADENOSINE-METHYLTRANSFERASE"/>
    <property type="match status" value="1"/>
</dbReference>
<dbReference type="Pfam" id="PF05063">
    <property type="entry name" value="MT-A70"/>
    <property type="match status" value="1"/>
</dbReference>
<dbReference type="SUPFAM" id="SSF53335">
    <property type="entry name" value="S-adenosyl-L-methionine-dependent methyltransferases"/>
    <property type="match status" value="1"/>
</dbReference>
<dbReference type="PROSITE" id="PS51143">
    <property type="entry name" value="MT_A70"/>
    <property type="match status" value="1"/>
</dbReference>
<dbReference type="PROSITE" id="PS00092">
    <property type="entry name" value="N6_MTASE"/>
    <property type="match status" value="1"/>
</dbReference>
<gene>
    <name evidence="5" type="primary">MTA1</name>
    <name evidence="4" type="synonym">IME4</name>
    <name type="ORF">MGG_01492</name>
</gene>